<keyword id="KW-1003">Cell membrane</keyword>
<keyword id="KW-1015">Disulfide bond</keyword>
<keyword id="KW-0256">Endoplasmic reticulum</keyword>
<keyword id="KW-0325">Glycoprotein</keyword>
<keyword id="KW-0445">Lipid transport</keyword>
<keyword id="KW-0472">Membrane</keyword>
<keyword id="KW-1185">Reference proteome</keyword>
<keyword id="KW-0769">Symport</keyword>
<keyword id="KW-0812">Transmembrane</keyword>
<keyword id="KW-1133">Transmembrane helix</keyword>
<keyword id="KW-0813">Transport</keyword>
<dbReference type="EMBL" id="BC085388">
    <property type="protein sequence ID" value="AAH85388.1"/>
    <property type="molecule type" value="mRNA"/>
</dbReference>
<dbReference type="RefSeq" id="NP_001007452.1">
    <property type="nucleotide sequence ID" value="NM_001007451.1"/>
</dbReference>
<dbReference type="SMR" id="Q5U3U7"/>
<dbReference type="FunCoup" id="Q5U3U7">
    <property type="interactions" value="4"/>
</dbReference>
<dbReference type="STRING" id="7955.ENSDARP00000046114"/>
<dbReference type="GlyCosmos" id="Q5U3U7">
    <property type="glycosylation" value="3 sites, No reported glycans"/>
</dbReference>
<dbReference type="PaxDb" id="7955-ENSDARP00000046114"/>
<dbReference type="GeneID" id="492810"/>
<dbReference type="KEGG" id="dre:492810"/>
<dbReference type="AGR" id="ZFIN:ZDB-GENE-041114-166"/>
<dbReference type="CTD" id="492810"/>
<dbReference type="ZFIN" id="ZDB-GENE-041114-166">
    <property type="gene designation" value="mfsd2aa"/>
</dbReference>
<dbReference type="eggNOG" id="KOG4830">
    <property type="taxonomic scope" value="Eukaryota"/>
</dbReference>
<dbReference type="InParanoid" id="Q5U3U7"/>
<dbReference type="OrthoDB" id="197206at2759"/>
<dbReference type="PhylomeDB" id="Q5U3U7"/>
<dbReference type="PRO" id="PR:Q5U3U7"/>
<dbReference type="Proteomes" id="UP000000437">
    <property type="component" value="Chromosome 13"/>
</dbReference>
<dbReference type="GO" id="GO:0005789">
    <property type="term" value="C:endoplasmic reticulum membrane"/>
    <property type="evidence" value="ECO:0007669"/>
    <property type="project" value="UniProtKB-SubCell"/>
</dbReference>
<dbReference type="GO" id="GO:0005886">
    <property type="term" value="C:plasma membrane"/>
    <property type="evidence" value="ECO:0000250"/>
    <property type="project" value="UniProtKB"/>
</dbReference>
<dbReference type="GO" id="GO:0015245">
    <property type="term" value="F:fatty acid transmembrane transporter activity"/>
    <property type="evidence" value="ECO:0000318"/>
    <property type="project" value="GO_Central"/>
</dbReference>
<dbReference type="GO" id="GO:0051978">
    <property type="term" value="F:lysophospholipid:sodium symporter activity"/>
    <property type="evidence" value="ECO:0000250"/>
    <property type="project" value="UniProtKB"/>
</dbReference>
<dbReference type="GO" id="GO:0015293">
    <property type="term" value="F:symporter activity"/>
    <property type="evidence" value="ECO:0000250"/>
    <property type="project" value="UniProtKB"/>
</dbReference>
<dbReference type="GO" id="GO:0008643">
    <property type="term" value="P:carbohydrate transport"/>
    <property type="evidence" value="ECO:0007669"/>
    <property type="project" value="InterPro"/>
</dbReference>
<dbReference type="GO" id="GO:0060856">
    <property type="term" value="P:establishment of blood-brain barrier"/>
    <property type="evidence" value="ECO:0000250"/>
    <property type="project" value="UniProtKB"/>
</dbReference>
<dbReference type="GO" id="GO:0015908">
    <property type="term" value="P:fatty acid transport"/>
    <property type="evidence" value="ECO:0000250"/>
    <property type="project" value="UniProtKB"/>
</dbReference>
<dbReference type="GO" id="GO:1990379">
    <property type="term" value="P:lipid transport across blood-brain barrier"/>
    <property type="evidence" value="ECO:0000250"/>
    <property type="project" value="UniProtKB"/>
</dbReference>
<dbReference type="GO" id="GO:0140329">
    <property type="term" value="P:lysophospholipid translocation"/>
    <property type="evidence" value="ECO:0000318"/>
    <property type="project" value="GO_Central"/>
</dbReference>
<dbReference type="GO" id="GO:0051977">
    <property type="term" value="P:lysophospholipid transport"/>
    <property type="evidence" value="ECO:0000314"/>
    <property type="project" value="ZFIN"/>
</dbReference>
<dbReference type="GO" id="GO:0035633">
    <property type="term" value="P:maintenance of blood-brain barrier"/>
    <property type="evidence" value="ECO:0000315"/>
    <property type="project" value="ZFIN"/>
</dbReference>
<dbReference type="GO" id="GO:0045056">
    <property type="term" value="P:transcytosis"/>
    <property type="evidence" value="ECO:0000250"/>
    <property type="project" value="UniProtKB"/>
</dbReference>
<dbReference type="GO" id="GO:0055085">
    <property type="term" value="P:transmembrane transport"/>
    <property type="evidence" value="ECO:0000318"/>
    <property type="project" value="GO_Central"/>
</dbReference>
<dbReference type="CDD" id="cd17451">
    <property type="entry name" value="MFS_NLS1_MFSD2A"/>
    <property type="match status" value="1"/>
</dbReference>
<dbReference type="FunFam" id="1.20.1250.20:FF:000185">
    <property type="entry name" value="sodium-dependent lysophosphatidylcholine symporter 1 isoform X1"/>
    <property type="match status" value="1"/>
</dbReference>
<dbReference type="FunFam" id="1.20.1250.20:FF:000183">
    <property type="entry name" value="sodium-dependent lysophosphatidylcholine symporter 1 isoform X2"/>
    <property type="match status" value="1"/>
</dbReference>
<dbReference type="Gene3D" id="1.20.1250.20">
    <property type="entry name" value="MFS general substrate transporter like domains"/>
    <property type="match status" value="1"/>
</dbReference>
<dbReference type="InterPro" id="IPR039672">
    <property type="entry name" value="MFS_2"/>
</dbReference>
<dbReference type="InterPro" id="IPR036259">
    <property type="entry name" value="MFS_trans_sf"/>
</dbReference>
<dbReference type="PANTHER" id="PTHR11328">
    <property type="entry name" value="MAJOR FACILITATOR SUPERFAMILY DOMAIN-CONTAINING PROTEIN"/>
    <property type="match status" value="1"/>
</dbReference>
<dbReference type="PANTHER" id="PTHR11328:SF29">
    <property type="entry name" value="SODIUM-DEPENDENT LYSOPHOSPHATIDYLCHOLINE SYMPORTER 1"/>
    <property type="match status" value="1"/>
</dbReference>
<dbReference type="Pfam" id="PF13347">
    <property type="entry name" value="MFS_2"/>
    <property type="match status" value="1"/>
</dbReference>
<dbReference type="SUPFAM" id="SSF103473">
    <property type="entry name" value="MFS general substrate transporter"/>
    <property type="match status" value="1"/>
</dbReference>
<name>NLS1A_DANRE</name>
<comment type="function">
    <text evidence="1">Sodium-dependent lysophosphatidylcholine (LPC) symporter, which plays an essential role for blood-brain barrier formation and function. Specifically expressed in endothelium of the blood-brain barrier of micro-vessels and transports LPC into the brain. Transport of LPC is essential because it constitutes the major mechanism by which docosahexaenoic acid (DHA), an omega-3 fatty acid that is essential for normal brain growth and cognitive function, enters the brain. Transports LPC carrying long-chain fatty acids such LPC oleate and LPC palmitate with a minimum acyl chain length of 14 carbons. Does not transport docosahexaenoic acid in unesterified fatty acid.</text>
</comment>
<comment type="catalytic activity">
    <reaction evidence="1">
        <text>a 1-acyl-sn-glycero-3-phosphocholine(in) + Na(+)(in) = a 1-acyl-sn-glycero-3-phosphocholine(out) + Na(+)(out)</text>
        <dbReference type="Rhea" id="RHEA:44376"/>
        <dbReference type="ChEBI" id="CHEBI:29101"/>
        <dbReference type="ChEBI" id="CHEBI:58168"/>
    </reaction>
</comment>
<comment type="catalytic activity">
    <reaction evidence="1">
        <text>1-(4Z,7Z,10Z,13Z,16Z,19Z-docosahexaenoyl)-sn-glycero-3-phosphocholine(in) + Na(+)(in) = 1-(4Z,7Z,10Z,13Z,16Z,19Z-docosahexaenoyl)-sn-glycero-3-phosphocholine(out) + Na(+)(out)</text>
        <dbReference type="Rhea" id="RHEA:43860"/>
        <dbReference type="ChEBI" id="CHEBI:29101"/>
        <dbReference type="ChEBI" id="CHEBI:73873"/>
    </reaction>
</comment>
<comment type="catalytic activity">
    <reaction evidence="1">
        <text>1-(9Z-octadecenoyl)-sn-glycero-3-phosphocholine(in) + Na(+)(in) = 1-(9Z-octadecenoyl)-sn-glycero-3-phosphocholine(out) + Na(+)(out)</text>
        <dbReference type="Rhea" id="RHEA:43856"/>
        <dbReference type="ChEBI" id="CHEBI:28610"/>
        <dbReference type="ChEBI" id="CHEBI:29101"/>
    </reaction>
</comment>
<comment type="catalytic activity">
    <reaction evidence="1">
        <text>1-hexadecanoyl-sn-glycero-3-phosphocholine(in) + Na(+)(in) = 1-hexadecanoyl-sn-glycero-3-phosphocholine(out) + Na(+)(out)</text>
        <dbReference type="Rhea" id="RHEA:43864"/>
        <dbReference type="ChEBI" id="CHEBI:29101"/>
        <dbReference type="ChEBI" id="CHEBI:72998"/>
    </reaction>
</comment>
<comment type="catalytic activity">
    <reaction evidence="1">
        <text>a 1-acyl-sn-glycero-3-phosphoethanolamine(in) + Na(+)(in) = a 1-acyl-sn-glycero-3-phosphoethanolamine(out) + Na(+)(out)</text>
        <dbReference type="Rhea" id="RHEA:43868"/>
        <dbReference type="ChEBI" id="CHEBI:29101"/>
        <dbReference type="ChEBI" id="CHEBI:64381"/>
    </reaction>
</comment>
<comment type="subcellular location">
    <subcellularLocation>
        <location evidence="1">Cell membrane</location>
        <topology evidence="2">Multi-pass membrane protein</topology>
    </subcellularLocation>
    <subcellularLocation>
        <location evidence="1">Endoplasmic reticulum membrane</location>
        <topology evidence="2">Multi-pass membrane protein</topology>
    </subcellularLocation>
</comment>
<comment type="tissue specificity">
    <text evidence="3">Expressed in the developing nervous system.</text>
</comment>
<comment type="disruption phenotype">
    <text evidence="3">Morpholino knockdown of the gene results in early postnatal lethality and microcephaly.</text>
</comment>
<comment type="similarity">
    <text evidence="4">Belongs to the major facilitator superfamily.</text>
</comment>
<gene>
    <name type="primary">mfsd2aa</name>
    <name type="synonym">mfsd2a</name>
    <name type="synonym">nls1a</name>
    <name type="ORF">zgc:101615</name>
</gene>
<evidence type="ECO:0000250" key="1">
    <source>
        <dbReference type="UniProtKB" id="Q9DA75"/>
    </source>
</evidence>
<evidence type="ECO:0000255" key="2"/>
<evidence type="ECO:0000269" key="3">
    <source>
    </source>
</evidence>
<evidence type="ECO:0000305" key="4"/>
<reference key="1">
    <citation type="submission" date="2004-11" db="EMBL/GenBank/DDBJ databases">
        <authorList>
            <consortium name="NIH - Zebrafish Gene Collection (ZGC) project"/>
        </authorList>
    </citation>
    <scope>NUCLEOTIDE SEQUENCE [LARGE SCALE MRNA]</scope>
    <source>
        <tissue>Embryo</tissue>
    </source>
</reference>
<reference key="2">
    <citation type="journal article" date="2015" name="Nat. Genet.">
        <title>Inactivating mutations in MFSD2A, required for omega-3 fatty acid transport in brain, cause a lethal microcephaly syndrome.</title>
        <authorList>
            <person name="Guemez-Gamboa A."/>
            <person name="Nguyen L.N."/>
            <person name="Yang H."/>
            <person name="Zaki M.S."/>
            <person name="Kara M."/>
            <person name="Ben-Omran T."/>
            <person name="Akizu N."/>
            <person name="Rosti R.O."/>
            <person name="Rosti B."/>
            <person name="Scott E."/>
            <person name="Schroth J."/>
            <person name="Copeland B."/>
            <person name="Vaux K.K."/>
            <person name="Cazenave-Gassiot A."/>
            <person name="Quek D.Q."/>
            <person name="Wong B.H."/>
            <person name="Tan B.C."/>
            <person name="Wenk M.R."/>
            <person name="Gunel M."/>
            <person name="Gabriel S."/>
            <person name="Chi N.C."/>
            <person name="Silver D.L."/>
            <person name="Gleeson J.G."/>
        </authorList>
    </citation>
    <scope>TISSUE SPECIFICITY</scope>
    <scope>DISRUPTION PHENOTYPE</scope>
</reference>
<sequence length="532" mass="59266">MARGEGAEQFSSGLLPTAKSVTQNEIKMVKLPKQQERKRALTVWSKVCFAIGGAPYQITGTALGFFLQIFLLDVAQLNPLNASVILFVGRAWDAVTDPTVGFLVSRTPWTRHGRMMPWILVSTIPAVLCYFLIWVVPPIEQGKMMWYLLFYCLFQTLQTCFHVPYSALTMFISTEQRERDSATAYRMTVEVFGTVVGTAIQGQIVGMANTPCKNNTSPNNSSNDLIQSNNSHIPLKSNIFDERCAYMIASAVISLIYVVCAAVLFFGVREQDVQGELKAQKRVSFQKGLRLVMGHGPYVKLVLAFLFTSLAFMLLEGNFAVFIKYTLGFREDFQNILLVIMVSATVSIPMWQWFLCRFGKKTAVYIGITWAVPFMILVVSVNSSLIVSYIVSIAAGVSVGAAFLLPWSMLPDVVDDFKLQNPTSQGHEAIFYSFYVFFTKFASGVSLGVSTLALSFAGYETGVCVQSDSVNLTLKLLVSAAPVSLIALGLLIFMTYPIDEERREYNNKQLQLLLRNEEEEDEMEVLKPDITA</sequence>
<protein>
    <recommendedName>
        <fullName>Sodium-dependent lysophosphatidylcholine symporter 1-A</fullName>
        <shortName>NLS1-A</shortName>
        <shortName>Sodium-dependent LPC symporter 1-A</shortName>
    </recommendedName>
    <alternativeName>
        <fullName>Major facilitator superfamily domain-containing protein 2A-A</fullName>
    </alternativeName>
</protein>
<organism>
    <name type="scientific">Danio rerio</name>
    <name type="common">Zebrafish</name>
    <name type="synonym">Brachydanio rerio</name>
    <dbReference type="NCBI Taxonomy" id="7955"/>
    <lineage>
        <taxon>Eukaryota</taxon>
        <taxon>Metazoa</taxon>
        <taxon>Chordata</taxon>
        <taxon>Craniata</taxon>
        <taxon>Vertebrata</taxon>
        <taxon>Euteleostomi</taxon>
        <taxon>Actinopterygii</taxon>
        <taxon>Neopterygii</taxon>
        <taxon>Teleostei</taxon>
        <taxon>Ostariophysi</taxon>
        <taxon>Cypriniformes</taxon>
        <taxon>Danionidae</taxon>
        <taxon>Danioninae</taxon>
        <taxon>Danio</taxon>
    </lineage>
</organism>
<proteinExistence type="evidence at transcript level"/>
<feature type="chain" id="PRO_0000273390" description="Sodium-dependent lysophosphatidylcholine symporter 1-A">
    <location>
        <begin position="1"/>
        <end position="532"/>
    </location>
</feature>
<feature type="topological domain" description="Cytoplasmic" evidence="1">
    <location>
        <begin position="1"/>
        <end position="40"/>
    </location>
</feature>
<feature type="transmembrane region" description="Helical" evidence="1">
    <location>
        <begin position="41"/>
        <end position="70"/>
    </location>
</feature>
<feature type="topological domain" description="Extracellular" evidence="1">
    <location>
        <begin position="71"/>
        <end position="81"/>
    </location>
</feature>
<feature type="transmembrane region" description="Helical" evidence="1">
    <location>
        <begin position="82"/>
        <end position="102"/>
    </location>
</feature>
<feature type="topological domain" description="Cytoplasmic" evidence="1">
    <location>
        <begin position="103"/>
        <end position="114"/>
    </location>
</feature>
<feature type="transmembrane region" description="Helical" evidence="1">
    <location>
        <begin position="115"/>
        <end position="134"/>
    </location>
</feature>
<feature type="topological domain" description="Extracellular" evidence="1">
    <location>
        <begin position="135"/>
        <end position="144"/>
    </location>
</feature>
<feature type="transmembrane region" description="Helical" evidence="1">
    <location>
        <begin position="145"/>
        <end position="169"/>
    </location>
</feature>
<feature type="topological domain" description="Cytoplasmic" evidence="1">
    <location>
        <begin position="170"/>
        <end position="176"/>
    </location>
</feature>
<feature type="transmembrane region" description="Helical" evidence="1">
    <location>
        <begin position="177"/>
        <end position="208"/>
    </location>
</feature>
<feature type="topological domain" description="Extracellular" evidence="1">
    <location>
        <begin position="209"/>
        <end position="232"/>
    </location>
</feature>
<feature type="transmembrane region" description="Helical" evidence="1">
    <location>
        <begin position="233"/>
        <end position="266"/>
    </location>
</feature>
<feature type="topological domain" description="Cytoplasmic" evidence="1">
    <location>
        <begin position="267"/>
        <end position="297"/>
    </location>
</feature>
<feature type="transmembrane region" description="Helical" evidence="1">
    <location>
        <begin position="298"/>
        <end position="324"/>
    </location>
</feature>
<feature type="topological domain" description="Extracellular" evidence="1">
    <location>
        <begin position="325"/>
        <end position="335"/>
    </location>
</feature>
<feature type="transmembrane region" description="Helical" evidence="1">
    <location>
        <begin position="336"/>
        <end position="354"/>
    </location>
</feature>
<feature type="topological domain" description="Cytoplasmic" evidence="1">
    <location>
        <begin position="355"/>
        <end position="358"/>
    </location>
</feature>
<feature type="transmembrane region" description="Helical" evidence="1">
    <location>
        <begin position="359"/>
        <end position="380"/>
    </location>
</feature>
<feature type="topological domain" description="Extracellular" evidence="1">
    <location>
        <begin position="381"/>
        <end position="383"/>
    </location>
</feature>
<feature type="transmembrane region" description="Helical" evidence="1">
    <location>
        <begin position="384"/>
        <end position="420"/>
    </location>
</feature>
<feature type="topological domain" description="Cytoplasmic" evidence="1">
    <location>
        <begin position="421"/>
        <end position="430"/>
    </location>
</feature>
<feature type="transmembrane region" description="Helical" evidence="1">
    <location>
        <begin position="431"/>
        <end position="457"/>
    </location>
</feature>
<feature type="topological domain" description="Extracellular" evidence="1">
    <location>
        <begin position="458"/>
        <end position="469"/>
    </location>
</feature>
<feature type="transmembrane region" description="Helical" evidence="1">
    <location>
        <begin position="470"/>
        <end position="493"/>
    </location>
</feature>
<feature type="topological domain" description="Cytoplasmic" evidence="1">
    <location>
        <begin position="494"/>
        <end position="532"/>
    </location>
</feature>
<feature type="glycosylation site" description="N-linked (GlcNAc...) asparagine" evidence="2">
    <location>
        <position position="214"/>
    </location>
</feature>
<feature type="glycosylation site" description="N-linked (GlcNAc...) asparagine" evidence="2">
    <location>
        <position position="220"/>
    </location>
</feature>
<feature type="glycosylation site" description="N-linked (GlcNAc...) asparagine" evidence="2">
    <location>
        <position position="229"/>
    </location>
</feature>
<feature type="disulfide bond" evidence="1">
    <location>
        <begin position="212"/>
        <end position="464"/>
    </location>
</feature>
<accession>Q5U3U7</accession>